<comment type="function">
    <text evidence="1">Produces ATP from ADP in the presence of a proton gradient across the membrane. The catalytic sites are hosted primarily by the beta subunits.</text>
</comment>
<comment type="catalytic activity">
    <reaction evidence="1">
        <text>ATP + H2O + 4 H(+)(in) = ADP + phosphate + 5 H(+)(out)</text>
        <dbReference type="Rhea" id="RHEA:57720"/>
        <dbReference type="ChEBI" id="CHEBI:15377"/>
        <dbReference type="ChEBI" id="CHEBI:15378"/>
        <dbReference type="ChEBI" id="CHEBI:30616"/>
        <dbReference type="ChEBI" id="CHEBI:43474"/>
        <dbReference type="ChEBI" id="CHEBI:456216"/>
        <dbReference type="EC" id="7.1.2.2"/>
    </reaction>
</comment>
<comment type="subunit">
    <text evidence="1">F-type ATPases have 2 components, CF(1) - the catalytic core - and CF(0) - the membrane proton channel. CF(1) has five subunits: alpha(3), beta(3), gamma(1), delta(1), epsilon(1). CF(0) has three main subunits: a(1), b(2) and c(9-12). The alpha and beta chains form an alternating ring which encloses part of the gamma chain. CF(1) is attached to CF(0) by a central stalk formed by the gamma and epsilon chains, while a peripheral stalk is formed by the delta and b chains.</text>
</comment>
<comment type="subcellular location">
    <subcellularLocation>
        <location evidence="1">Cell membrane</location>
        <topology evidence="1">Peripheral membrane protein</topology>
    </subcellularLocation>
</comment>
<comment type="similarity">
    <text evidence="1">Belongs to the ATPase alpha/beta chains family.</text>
</comment>
<dbReference type="EC" id="7.1.2.2" evidence="1"/>
<dbReference type="EMBL" id="CP000056">
    <property type="protein sequence ID" value="AAX71673.1"/>
    <property type="molecule type" value="Genomic_DNA"/>
</dbReference>
<dbReference type="RefSeq" id="WP_002985235.1">
    <property type="nucleotide sequence ID" value="NC_007296.2"/>
</dbReference>
<dbReference type="SMR" id="Q48UD3"/>
<dbReference type="GeneID" id="69901114"/>
<dbReference type="KEGG" id="spb:M28_Spy0559"/>
<dbReference type="HOGENOM" id="CLU_022398_0_2_9"/>
<dbReference type="GO" id="GO:0005886">
    <property type="term" value="C:plasma membrane"/>
    <property type="evidence" value="ECO:0007669"/>
    <property type="project" value="UniProtKB-SubCell"/>
</dbReference>
<dbReference type="GO" id="GO:0045259">
    <property type="term" value="C:proton-transporting ATP synthase complex"/>
    <property type="evidence" value="ECO:0007669"/>
    <property type="project" value="UniProtKB-KW"/>
</dbReference>
<dbReference type="GO" id="GO:0005524">
    <property type="term" value="F:ATP binding"/>
    <property type="evidence" value="ECO:0007669"/>
    <property type="project" value="UniProtKB-UniRule"/>
</dbReference>
<dbReference type="GO" id="GO:0016887">
    <property type="term" value="F:ATP hydrolysis activity"/>
    <property type="evidence" value="ECO:0007669"/>
    <property type="project" value="InterPro"/>
</dbReference>
<dbReference type="GO" id="GO:0046933">
    <property type="term" value="F:proton-transporting ATP synthase activity, rotational mechanism"/>
    <property type="evidence" value="ECO:0007669"/>
    <property type="project" value="UniProtKB-UniRule"/>
</dbReference>
<dbReference type="CDD" id="cd18110">
    <property type="entry name" value="ATP-synt_F1_beta_C"/>
    <property type="match status" value="1"/>
</dbReference>
<dbReference type="CDD" id="cd18115">
    <property type="entry name" value="ATP-synt_F1_beta_N"/>
    <property type="match status" value="1"/>
</dbReference>
<dbReference type="CDD" id="cd01133">
    <property type="entry name" value="F1-ATPase_beta_CD"/>
    <property type="match status" value="1"/>
</dbReference>
<dbReference type="FunFam" id="1.10.1140.10:FF:000001">
    <property type="entry name" value="ATP synthase subunit beta"/>
    <property type="match status" value="1"/>
</dbReference>
<dbReference type="FunFam" id="2.40.10.170:FF:000005">
    <property type="entry name" value="ATP synthase subunit beta"/>
    <property type="match status" value="1"/>
</dbReference>
<dbReference type="FunFam" id="3.40.50.300:FF:000004">
    <property type="entry name" value="ATP synthase subunit beta"/>
    <property type="match status" value="1"/>
</dbReference>
<dbReference type="Gene3D" id="2.40.10.170">
    <property type="match status" value="1"/>
</dbReference>
<dbReference type="Gene3D" id="1.10.1140.10">
    <property type="entry name" value="Bovine Mitochondrial F1-atpase, Atp Synthase Beta Chain, Chain D, domain 3"/>
    <property type="match status" value="1"/>
</dbReference>
<dbReference type="Gene3D" id="3.40.50.300">
    <property type="entry name" value="P-loop containing nucleotide triphosphate hydrolases"/>
    <property type="match status" value="1"/>
</dbReference>
<dbReference type="HAMAP" id="MF_01347">
    <property type="entry name" value="ATP_synth_beta_bact"/>
    <property type="match status" value="1"/>
</dbReference>
<dbReference type="InterPro" id="IPR003593">
    <property type="entry name" value="AAA+_ATPase"/>
</dbReference>
<dbReference type="InterPro" id="IPR055190">
    <property type="entry name" value="ATP-synt_VA_C"/>
</dbReference>
<dbReference type="InterPro" id="IPR005722">
    <property type="entry name" value="ATP_synth_F1_bsu"/>
</dbReference>
<dbReference type="InterPro" id="IPR020003">
    <property type="entry name" value="ATPase_a/bsu_AS"/>
</dbReference>
<dbReference type="InterPro" id="IPR050053">
    <property type="entry name" value="ATPase_alpha/beta_chains"/>
</dbReference>
<dbReference type="InterPro" id="IPR004100">
    <property type="entry name" value="ATPase_F1/V1/A1_a/bsu_N"/>
</dbReference>
<dbReference type="InterPro" id="IPR036121">
    <property type="entry name" value="ATPase_F1/V1/A1_a/bsu_N_sf"/>
</dbReference>
<dbReference type="InterPro" id="IPR000194">
    <property type="entry name" value="ATPase_F1/V1/A1_a/bsu_nucl-bd"/>
</dbReference>
<dbReference type="InterPro" id="IPR024034">
    <property type="entry name" value="ATPase_F1/V1_b/a_C"/>
</dbReference>
<dbReference type="InterPro" id="IPR027417">
    <property type="entry name" value="P-loop_NTPase"/>
</dbReference>
<dbReference type="NCBIfam" id="TIGR01039">
    <property type="entry name" value="atpD"/>
    <property type="match status" value="1"/>
</dbReference>
<dbReference type="PANTHER" id="PTHR15184">
    <property type="entry name" value="ATP SYNTHASE"/>
    <property type="match status" value="1"/>
</dbReference>
<dbReference type="PANTHER" id="PTHR15184:SF71">
    <property type="entry name" value="ATP SYNTHASE SUBUNIT BETA, MITOCHONDRIAL"/>
    <property type="match status" value="1"/>
</dbReference>
<dbReference type="Pfam" id="PF00006">
    <property type="entry name" value="ATP-synt_ab"/>
    <property type="match status" value="1"/>
</dbReference>
<dbReference type="Pfam" id="PF02874">
    <property type="entry name" value="ATP-synt_ab_N"/>
    <property type="match status" value="1"/>
</dbReference>
<dbReference type="Pfam" id="PF22919">
    <property type="entry name" value="ATP-synt_VA_C"/>
    <property type="match status" value="1"/>
</dbReference>
<dbReference type="SMART" id="SM00382">
    <property type="entry name" value="AAA"/>
    <property type="match status" value="1"/>
</dbReference>
<dbReference type="SUPFAM" id="SSF47917">
    <property type="entry name" value="C-terminal domain of alpha and beta subunits of F1 ATP synthase"/>
    <property type="match status" value="1"/>
</dbReference>
<dbReference type="SUPFAM" id="SSF50615">
    <property type="entry name" value="N-terminal domain of alpha and beta subunits of F1 ATP synthase"/>
    <property type="match status" value="1"/>
</dbReference>
<dbReference type="SUPFAM" id="SSF52540">
    <property type="entry name" value="P-loop containing nucleoside triphosphate hydrolases"/>
    <property type="match status" value="1"/>
</dbReference>
<dbReference type="PROSITE" id="PS00152">
    <property type="entry name" value="ATPASE_ALPHA_BETA"/>
    <property type="match status" value="1"/>
</dbReference>
<accession>Q48UD3</accession>
<sequence>MSSGKIAQVVGPVVDVMFASGDKLPEINNALIVYKDSDKKQKIVLEVALELGDGMVRTIAMESTDGLTRGLEVLDTGRAISVPVGKETLGRVFNVLGETIDLEEPFAEDVDRQPIHKKAPSFDELSTSSEILETGIKVIDLLAPYLKGGKVGLFGGAGVGKTVLIQELIHNIAQEHGGISVFTGVGERTREGNDLYWEMKESGVIEKTAMVFGQMNEPPGARMRVALTGLTIAEYFRDVEGQDVLLFIDNIFRFTQAGSEVSALLGRMPSAVGYQPTLATEMGQLQERITSTQKGSVTSIQAIYVPADDYTDPAPATAFAHLDSTTNLERKLTQMGIYPAVDPLASSSRALSPEIVGEEHYAVATEVQRVLQRYRELQDIIAILGMDELSDEEKTLVGRARRIQFFLSQNFNVAEQFTGLPGSYVPVAETVRGFKEILEGKYDDLPEDAFRSVGPIEDVIKKAEKMGF</sequence>
<name>ATPB_STRPM</name>
<gene>
    <name evidence="1" type="primary">atpD</name>
    <name type="ordered locus">M28_Spy0559</name>
</gene>
<feature type="chain" id="PRO_0000254396" description="ATP synthase subunit beta">
    <location>
        <begin position="1"/>
        <end position="468"/>
    </location>
</feature>
<feature type="binding site" evidence="1">
    <location>
        <begin position="155"/>
        <end position="162"/>
    </location>
    <ligand>
        <name>ATP</name>
        <dbReference type="ChEBI" id="CHEBI:30616"/>
    </ligand>
</feature>
<organism>
    <name type="scientific">Streptococcus pyogenes serotype M28 (strain MGAS6180)</name>
    <dbReference type="NCBI Taxonomy" id="319701"/>
    <lineage>
        <taxon>Bacteria</taxon>
        <taxon>Bacillati</taxon>
        <taxon>Bacillota</taxon>
        <taxon>Bacilli</taxon>
        <taxon>Lactobacillales</taxon>
        <taxon>Streptococcaceae</taxon>
        <taxon>Streptococcus</taxon>
    </lineage>
</organism>
<keyword id="KW-0066">ATP synthesis</keyword>
<keyword id="KW-0067">ATP-binding</keyword>
<keyword id="KW-1003">Cell membrane</keyword>
<keyword id="KW-0139">CF(1)</keyword>
<keyword id="KW-0375">Hydrogen ion transport</keyword>
<keyword id="KW-0406">Ion transport</keyword>
<keyword id="KW-0472">Membrane</keyword>
<keyword id="KW-0547">Nucleotide-binding</keyword>
<keyword id="KW-1278">Translocase</keyword>
<keyword id="KW-0813">Transport</keyword>
<proteinExistence type="inferred from homology"/>
<reference key="1">
    <citation type="journal article" date="2005" name="J. Infect. Dis.">
        <title>Genome sequence of a serotype M28 strain of group A Streptococcus: potential new insights into puerperal sepsis and bacterial disease specificity.</title>
        <authorList>
            <person name="Green N.M."/>
            <person name="Zhang S."/>
            <person name="Porcella S.F."/>
            <person name="Nagiec M.J."/>
            <person name="Barbian K.D."/>
            <person name="Beres S.B."/>
            <person name="Lefebvre R.B."/>
            <person name="Musser J.M."/>
        </authorList>
    </citation>
    <scope>NUCLEOTIDE SEQUENCE [LARGE SCALE GENOMIC DNA]</scope>
    <source>
        <strain>MGAS6180</strain>
    </source>
</reference>
<protein>
    <recommendedName>
        <fullName evidence="1">ATP synthase subunit beta</fullName>
        <ecNumber evidence="1">7.1.2.2</ecNumber>
    </recommendedName>
    <alternativeName>
        <fullName evidence="1">ATP synthase F1 sector subunit beta</fullName>
    </alternativeName>
    <alternativeName>
        <fullName evidence="1">F-ATPase subunit beta</fullName>
    </alternativeName>
</protein>
<evidence type="ECO:0000255" key="1">
    <source>
        <dbReference type="HAMAP-Rule" id="MF_01347"/>
    </source>
</evidence>